<reference key="1">
    <citation type="journal article" date="2010" name="Genome Biol. Evol.">
        <title>Continuing evolution of Burkholderia mallei through genome reduction and large-scale rearrangements.</title>
        <authorList>
            <person name="Losada L."/>
            <person name="Ronning C.M."/>
            <person name="DeShazer D."/>
            <person name="Woods D."/>
            <person name="Fedorova N."/>
            <person name="Kim H.S."/>
            <person name="Shabalina S.A."/>
            <person name="Pearson T.R."/>
            <person name="Brinkac L."/>
            <person name="Tan P."/>
            <person name="Nandi T."/>
            <person name="Crabtree J."/>
            <person name="Badger J."/>
            <person name="Beckstrom-Sternberg S."/>
            <person name="Saqib M."/>
            <person name="Schutzer S.E."/>
            <person name="Keim P."/>
            <person name="Nierman W.C."/>
        </authorList>
    </citation>
    <scope>NUCLEOTIDE SEQUENCE [LARGE SCALE GENOMIC DNA]</scope>
    <source>
        <strain>668</strain>
    </source>
</reference>
<organism>
    <name type="scientific">Burkholderia pseudomallei (strain 668)</name>
    <dbReference type="NCBI Taxonomy" id="320373"/>
    <lineage>
        <taxon>Bacteria</taxon>
        <taxon>Pseudomonadati</taxon>
        <taxon>Pseudomonadota</taxon>
        <taxon>Betaproteobacteria</taxon>
        <taxon>Burkholderiales</taxon>
        <taxon>Burkholderiaceae</taxon>
        <taxon>Burkholderia</taxon>
        <taxon>pseudomallei group</taxon>
    </lineage>
</organism>
<accession>A3NEH1</accession>
<name>RL29_BURP6</name>
<keyword id="KW-0687">Ribonucleoprotein</keyword>
<keyword id="KW-0689">Ribosomal protein</keyword>
<protein>
    <recommendedName>
        <fullName evidence="1">Large ribosomal subunit protein uL29</fullName>
    </recommendedName>
    <alternativeName>
        <fullName evidence="2">50S ribosomal protein L29</fullName>
    </alternativeName>
</protein>
<feature type="chain" id="PRO_1000007441" description="Large ribosomal subunit protein uL29">
    <location>
        <begin position="1"/>
        <end position="64"/>
    </location>
</feature>
<dbReference type="EMBL" id="CP000570">
    <property type="protein sequence ID" value="ABN83491.1"/>
    <property type="molecule type" value="Genomic_DNA"/>
</dbReference>
<dbReference type="RefSeq" id="WP_004199856.1">
    <property type="nucleotide sequence ID" value="NC_009074.1"/>
</dbReference>
<dbReference type="SMR" id="A3NEH1"/>
<dbReference type="GeneID" id="93061824"/>
<dbReference type="KEGG" id="bpd:BURPS668_3738"/>
<dbReference type="HOGENOM" id="CLU_158491_1_1_4"/>
<dbReference type="GO" id="GO:0022625">
    <property type="term" value="C:cytosolic large ribosomal subunit"/>
    <property type="evidence" value="ECO:0007669"/>
    <property type="project" value="TreeGrafter"/>
</dbReference>
<dbReference type="GO" id="GO:0003735">
    <property type="term" value="F:structural constituent of ribosome"/>
    <property type="evidence" value="ECO:0007669"/>
    <property type="project" value="InterPro"/>
</dbReference>
<dbReference type="GO" id="GO:0006412">
    <property type="term" value="P:translation"/>
    <property type="evidence" value="ECO:0007669"/>
    <property type="project" value="UniProtKB-UniRule"/>
</dbReference>
<dbReference type="CDD" id="cd00427">
    <property type="entry name" value="Ribosomal_L29_HIP"/>
    <property type="match status" value="1"/>
</dbReference>
<dbReference type="Gene3D" id="6.10.140.1970">
    <property type="match status" value="1"/>
</dbReference>
<dbReference type="HAMAP" id="MF_00374">
    <property type="entry name" value="Ribosomal_uL29"/>
    <property type="match status" value="1"/>
</dbReference>
<dbReference type="InterPro" id="IPR050063">
    <property type="entry name" value="Ribosomal_protein_uL29"/>
</dbReference>
<dbReference type="InterPro" id="IPR001854">
    <property type="entry name" value="Ribosomal_uL29"/>
</dbReference>
<dbReference type="InterPro" id="IPR018254">
    <property type="entry name" value="Ribosomal_uL29_CS"/>
</dbReference>
<dbReference type="InterPro" id="IPR036049">
    <property type="entry name" value="Ribosomal_uL29_sf"/>
</dbReference>
<dbReference type="NCBIfam" id="TIGR00012">
    <property type="entry name" value="L29"/>
    <property type="match status" value="1"/>
</dbReference>
<dbReference type="PANTHER" id="PTHR10916">
    <property type="entry name" value="60S RIBOSOMAL PROTEIN L35/50S RIBOSOMAL PROTEIN L29"/>
    <property type="match status" value="1"/>
</dbReference>
<dbReference type="PANTHER" id="PTHR10916:SF0">
    <property type="entry name" value="LARGE RIBOSOMAL SUBUNIT PROTEIN UL29C"/>
    <property type="match status" value="1"/>
</dbReference>
<dbReference type="Pfam" id="PF00831">
    <property type="entry name" value="Ribosomal_L29"/>
    <property type="match status" value="1"/>
</dbReference>
<dbReference type="SUPFAM" id="SSF46561">
    <property type="entry name" value="Ribosomal protein L29 (L29p)"/>
    <property type="match status" value="1"/>
</dbReference>
<dbReference type="PROSITE" id="PS00579">
    <property type="entry name" value="RIBOSOMAL_L29"/>
    <property type="match status" value="1"/>
</dbReference>
<sequence length="64" mass="7310">MKASELLQKDQAALNKELSDLLKAQFGLRMQLATQQLTNTSQLKKVRRDIARVRTVLTQKANQK</sequence>
<gene>
    <name evidence="1" type="primary">rpmC</name>
    <name type="ordered locus">BURPS668_3738</name>
</gene>
<evidence type="ECO:0000255" key="1">
    <source>
        <dbReference type="HAMAP-Rule" id="MF_00374"/>
    </source>
</evidence>
<evidence type="ECO:0000305" key="2"/>
<comment type="similarity">
    <text evidence="1">Belongs to the universal ribosomal protein uL29 family.</text>
</comment>
<proteinExistence type="inferred from homology"/>